<feature type="transit peptide" description="Mitochondrion" evidence="2">
    <location>
        <begin position="1"/>
        <end position="32"/>
    </location>
</feature>
<feature type="chain" id="PRO_0000399545" description="Altered inheritance of mitochondria protein 23, mitochondrial">
    <location>
        <begin position="33"/>
        <end position="356"/>
    </location>
</feature>
<keyword id="KW-0496">Mitochondrion</keyword>
<keyword id="KW-0809">Transit peptide</keyword>
<name>AIM23_YEAS1</name>
<protein>
    <recommendedName>
        <fullName>Altered inheritance of mitochondria protein 23, mitochondrial</fullName>
    </recommendedName>
</protein>
<reference key="1">
    <citation type="submission" date="2005-03" db="EMBL/GenBank/DDBJ databases">
        <title>Annotation of the Saccharomyces cerevisiae RM11-1a genome.</title>
        <authorList>
            <consortium name="The Broad Institute Genome Sequencing Platform"/>
            <person name="Birren B.W."/>
            <person name="Lander E.S."/>
            <person name="Galagan J.E."/>
            <person name="Nusbaum C."/>
            <person name="Devon K."/>
            <person name="Cuomo C."/>
            <person name="Jaffe D.B."/>
            <person name="Butler J."/>
            <person name="Alvarez P."/>
            <person name="Gnerre S."/>
            <person name="Grabherr M."/>
            <person name="Kleber M."/>
            <person name="Mauceli E.W."/>
            <person name="Brockman W."/>
            <person name="MacCallum I.A."/>
            <person name="Rounsley S."/>
            <person name="Young S.K."/>
            <person name="LaButti K."/>
            <person name="Pushparaj V."/>
            <person name="DeCaprio D."/>
            <person name="Crawford M."/>
            <person name="Koehrsen M."/>
            <person name="Engels R."/>
            <person name="Montgomery P."/>
            <person name="Pearson M."/>
            <person name="Howarth C."/>
            <person name="Larson L."/>
            <person name="Luoma S."/>
            <person name="White J."/>
            <person name="O'Leary S."/>
            <person name="Kodira C.D."/>
            <person name="Zeng Q."/>
            <person name="Yandava C."/>
            <person name="Alvarado L."/>
            <person name="Pratt S."/>
            <person name="Kruglyak L."/>
        </authorList>
    </citation>
    <scope>NUCLEOTIDE SEQUENCE [LARGE SCALE GENOMIC DNA]</scope>
    <source>
        <strain>RM11-1a</strain>
    </source>
</reference>
<organism>
    <name type="scientific">Saccharomyces cerevisiae (strain RM11-1a)</name>
    <name type="common">Baker's yeast</name>
    <dbReference type="NCBI Taxonomy" id="285006"/>
    <lineage>
        <taxon>Eukaryota</taxon>
        <taxon>Fungi</taxon>
        <taxon>Dikarya</taxon>
        <taxon>Ascomycota</taxon>
        <taxon>Saccharomycotina</taxon>
        <taxon>Saccharomycetes</taxon>
        <taxon>Saccharomycetales</taxon>
        <taxon>Saccharomycetaceae</taxon>
        <taxon>Saccharomyces</taxon>
    </lineage>
</organism>
<gene>
    <name type="primary">AIM23</name>
    <name type="ORF">SCRG_03543</name>
</gene>
<dbReference type="EMBL" id="CH408050">
    <property type="protein sequence ID" value="EDV12640.1"/>
    <property type="molecule type" value="Genomic_DNA"/>
</dbReference>
<dbReference type="SMR" id="B3LPY7"/>
<dbReference type="HOGENOM" id="CLU_057910_0_0_1"/>
<dbReference type="OrthoDB" id="6139at4893"/>
<dbReference type="Proteomes" id="UP000008335">
    <property type="component" value="Unassembled WGS sequence"/>
</dbReference>
<dbReference type="GO" id="GO:0005739">
    <property type="term" value="C:mitochondrion"/>
    <property type="evidence" value="ECO:0007669"/>
    <property type="project" value="UniProtKB-SubCell"/>
</dbReference>
<dbReference type="InterPro" id="IPR029427">
    <property type="entry name" value="AIM23"/>
</dbReference>
<dbReference type="Pfam" id="PF14877">
    <property type="entry name" value="mIF3"/>
    <property type="match status" value="1"/>
</dbReference>
<proteinExistence type="inferred from homology"/>
<comment type="subcellular location">
    <subcellularLocation>
        <location evidence="1">Mitochondrion</location>
    </subcellularLocation>
</comment>
<comment type="similarity">
    <text evidence="3">Belongs to the AIM23 family.</text>
</comment>
<accession>B3LPY7</accession>
<evidence type="ECO:0000250" key="1"/>
<evidence type="ECO:0000255" key="2"/>
<evidence type="ECO:0000305" key="3"/>
<sequence length="356" mass="41501">MLKVPLSDVLSQKMLFLKSFRYFHCTKYFSRDNASSTTDIFRNAMKRKRELANLKEQSHGNVARNAAFPKEYIKRPKQVPRNATNRKKILITWSTGTDRAKEAANSVVSEIFKKNHKGNIKVVDPTTHRIEPSNIRYFAKGIDLDKVGLSIVNVEQIDNENQIPLVKIIESRVALKKYSDFLAKKKEKELMELGVLNKSYKNLVTDKKEDNLKHIKISWQIESDDLKRQKAHEIVSLLKKGNKVTLYLDDKNNINSNNWLENFEELDRSQKGEPPRLPESVFQKRAAVLETLKEIVSEYANDPVLLGNMNSKMIMKLIPKDVKPQNNDKRALKELRKKERQEKLQKRIQRKKMNEM</sequence>